<evidence type="ECO:0000255" key="1">
    <source>
        <dbReference type="HAMAP-Rule" id="MF_00800"/>
    </source>
</evidence>
<sequence length="180" mass="19413">MDLEKLKEETQIIIDDVLKQTEIKSGQVFVLGLSSSEVNGGLIGHASSAEIGQVIVSVIHKTLSDKGIYLAVQACEHLNRALLIEEELADKKDWEIVSVVPQLHAGGSGQVAAYQLFKSPVEVEHIVAQAGLDIGDTSIGMHVKHVQIPVRPISKELGGAHVTALKSRPKLIGGERARYE</sequence>
<organism>
    <name type="scientific">Lactococcus lactis subsp. cremoris (strain MG1363)</name>
    <dbReference type="NCBI Taxonomy" id="416870"/>
    <lineage>
        <taxon>Bacteria</taxon>
        <taxon>Bacillati</taxon>
        <taxon>Bacillota</taxon>
        <taxon>Bacilli</taxon>
        <taxon>Lactobacillales</taxon>
        <taxon>Streptococcaceae</taxon>
        <taxon>Lactococcus</taxon>
        <taxon>Lactococcus cremoris subsp. cremoris</taxon>
    </lineage>
</organism>
<comment type="similarity">
    <text evidence="1">Belongs to the UPF0340 family.</text>
</comment>
<reference key="1">
    <citation type="journal article" date="2007" name="J. Bacteriol.">
        <title>The complete genome sequence of the lactic acid bacterial paradigm Lactococcus lactis subsp. cremoris MG1363.</title>
        <authorList>
            <person name="Wegmann U."/>
            <person name="O'Connell-Motherway M."/>
            <person name="Zomer A."/>
            <person name="Buist G."/>
            <person name="Shearman C."/>
            <person name="Canchaya C."/>
            <person name="Ventura M."/>
            <person name="Goesmann A."/>
            <person name="Gasson M.J."/>
            <person name="Kuipers O.P."/>
            <person name="van Sinderen D."/>
            <person name="Kok J."/>
        </authorList>
    </citation>
    <scope>NUCLEOTIDE SEQUENCE [LARGE SCALE GENOMIC DNA]</scope>
    <source>
        <strain>MG1363</strain>
    </source>
</reference>
<name>Y465_LACLM</name>
<dbReference type="EMBL" id="AM406671">
    <property type="protein sequence ID" value="CAL97069.1"/>
    <property type="molecule type" value="Genomic_DNA"/>
</dbReference>
<dbReference type="RefSeq" id="WP_011834506.1">
    <property type="nucleotide sequence ID" value="NC_009004.1"/>
</dbReference>
<dbReference type="SMR" id="A2RIH4"/>
<dbReference type="STRING" id="416870.llmg_0465"/>
<dbReference type="GeneID" id="61108765"/>
<dbReference type="KEGG" id="llm:llmg_0465"/>
<dbReference type="eggNOG" id="COG4475">
    <property type="taxonomic scope" value="Bacteria"/>
</dbReference>
<dbReference type="HOGENOM" id="CLU_106658_0_0_9"/>
<dbReference type="OrthoDB" id="9803187at2"/>
<dbReference type="PhylomeDB" id="A2RIH4"/>
<dbReference type="Proteomes" id="UP000000364">
    <property type="component" value="Chromosome"/>
</dbReference>
<dbReference type="Gene3D" id="3.40.50.10360">
    <property type="entry name" value="Hypothetical protein TT1679"/>
    <property type="match status" value="1"/>
</dbReference>
<dbReference type="HAMAP" id="MF_00800">
    <property type="entry name" value="UPF0340"/>
    <property type="match status" value="1"/>
</dbReference>
<dbReference type="InterPro" id="IPR028345">
    <property type="entry name" value="Antibiotic_NAT-like"/>
</dbReference>
<dbReference type="InterPro" id="IPR006340">
    <property type="entry name" value="DUF436"/>
</dbReference>
<dbReference type="NCBIfam" id="TIGR01440">
    <property type="entry name" value="TIGR01440 family protein"/>
    <property type="match status" value="1"/>
</dbReference>
<dbReference type="Pfam" id="PF04260">
    <property type="entry name" value="DUF436"/>
    <property type="match status" value="1"/>
</dbReference>
<dbReference type="PIRSF" id="PIRSF007510">
    <property type="entry name" value="UCP007510"/>
    <property type="match status" value="1"/>
</dbReference>
<dbReference type="SUPFAM" id="SSF110710">
    <property type="entry name" value="TTHA0583/YokD-like"/>
    <property type="match status" value="1"/>
</dbReference>
<accession>A2RIH4</accession>
<protein>
    <recommendedName>
        <fullName evidence="1">UPF0340 protein llmg_0465</fullName>
    </recommendedName>
</protein>
<proteinExistence type="inferred from homology"/>
<feature type="chain" id="PRO_1000046975" description="UPF0340 protein llmg_0465">
    <location>
        <begin position="1"/>
        <end position="180"/>
    </location>
</feature>
<gene>
    <name type="ordered locus">llmg_0465</name>
</gene>